<gene>
    <name evidence="1" type="primary">argH</name>
    <name type="ordered locus">spr0103</name>
</gene>
<accession>Q8DRI4</accession>
<comment type="catalytic activity">
    <reaction evidence="1">
        <text>2-(N(omega)-L-arginino)succinate = fumarate + L-arginine</text>
        <dbReference type="Rhea" id="RHEA:24020"/>
        <dbReference type="ChEBI" id="CHEBI:29806"/>
        <dbReference type="ChEBI" id="CHEBI:32682"/>
        <dbReference type="ChEBI" id="CHEBI:57472"/>
        <dbReference type="EC" id="4.3.2.1"/>
    </reaction>
</comment>
<comment type="pathway">
    <text evidence="1">Amino-acid biosynthesis; L-arginine biosynthesis; L-arginine from L-ornithine and carbamoyl phosphate: step 3/3.</text>
</comment>
<comment type="subcellular location">
    <subcellularLocation>
        <location evidence="1">Cytoplasm</location>
    </subcellularLocation>
</comment>
<comment type="similarity">
    <text evidence="1">Belongs to the lyase 1 family. Argininosuccinate lyase subfamily.</text>
</comment>
<name>ARLY_STRR6</name>
<keyword id="KW-0028">Amino-acid biosynthesis</keyword>
<keyword id="KW-0055">Arginine biosynthesis</keyword>
<keyword id="KW-0963">Cytoplasm</keyword>
<keyword id="KW-0456">Lyase</keyword>
<keyword id="KW-1185">Reference proteome</keyword>
<sequence length="463" mass="52324">MAKNTKLWGGRFEGTVEDWVERFGASISFDQKLAKFDVIGSLAHVQMLGQTGILSLEESEKIQVGLKELLEELEAGQLDFDIANEDIHMNMEVLLTEKIGPLAGKLHTARSRNDQVATDMHLYLKEQLGYVLDKLAHLKGVLLDLAENHVATIMPGYTHLQHAQPISFAYHLMAYYNMFQRDSERFEFNQKHTDLCPLGAAALAGTTFPIDRQLSSDLLEFKQPYTNSLDAVSDRDFILEFLSNASILMMHMSRFCEEMINWCSFEYQFITLSDTFTIGSSIMPQKKNPDMAELIRGKTGRVYGHLFGLLTVMKSLPLAYNKDLQEDKEGMFDTVETILNSLDVLAGMLSSLQVNKEKMQESTEKDFSNATELADYLAGKGLPFREAHEVVGRLVLDSIKSAKNLQDWTLEELQTYHSLITEDIYVYLQPKTAVQRRNSLGGTGFDQVEYQIAVAKKANEAKK</sequence>
<reference key="1">
    <citation type="journal article" date="2001" name="J. Bacteriol.">
        <title>Genome of the bacterium Streptococcus pneumoniae strain R6.</title>
        <authorList>
            <person name="Hoskins J."/>
            <person name="Alborn W.E. Jr."/>
            <person name="Arnold J."/>
            <person name="Blaszczak L.C."/>
            <person name="Burgett S."/>
            <person name="DeHoff B.S."/>
            <person name="Estrem S.T."/>
            <person name="Fritz L."/>
            <person name="Fu D.-J."/>
            <person name="Fuller W."/>
            <person name="Geringer C."/>
            <person name="Gilmour R."/>
            <person name="Glass J.S."/>
            <person name="Khoja H."/>
            <person name="Kraft A.R."/>
            <person name="Lagace R.E."/>
            <person name="LeBlanc D.J."/>
            <person name="Lee L.N."/>
            <person name="Lefkowitz E.J."/>
            <person name="Lu J."/>
            <person name="Matsushima P."/>
            <person name="McAhren S.M."/>
            <person name="McHenney M."/>
            <person name="McLeaster K."/>
            <person name="Mundy C.W."/>
            <person name="Nicas T.I."/>
            <person name="Norris F.H."/>
            <person name="O'Gara M."/>
            <person name="Peery R.B."/>
            <person name="Robertson G.T."/>
            <person name="Rockey P."/>
            <person name="Sun P.-M."/>
            <person name="Winkler M.E."/>
            <person name="Yang Y."/>
            <person name="Young-Bellido M."/>
            <person name="Zhao G."/>
            <person name="Zook C.A."/>
            <person name="Baltz R.H."/>
            <person name="Jaskunas S.R."/>
            <person name="Rosteck P.R. Jr."/>
            <person name="Skatrud P.L."/>
            <person name="Glass J.I."/>
        </authorList>
    </citation>
    <scope>NUCLEOTIDE SEQUENCE [LARGE SCALE GENOMIC DNA]</scope>
    <source>
        <strain>ATCC BAA-255 / R6</strain>
    </source>
</reference>
<proteinExistence type="inferred from homology"/>
<organism>
    <name type="scientific">Streptococcus pneumoniae (strain ATCC BAA-255 / R6)</name>
    <dbReference type="NCBI Taxonomy" id="171101"/>
    <lineage>
        <taxon>Bacteria</taxon>
        <taxon>Bacillati</taxon>
        <taxon>Bacillota</taxon>
        <taxon>Bacilli</taxon>
        <taxon>Lactobacillales</taxon>
        <taxon>Streptococcaceae</taxon>
        <taxon>Streptococcus</taxon>
    </lineage>
</organism>
<evidence type="ECO:0000255" key="1">
    <source>
        <dbReference type="HAMAP-Rule" id="MF_00006"/>
    </source>
</evidence>
<protein>
    <recommendedName>
        <fullName evidence="1">Argininosuccinate lyase</fullName>
        <shortName evidence="1">ASAL</shortName>
        <ecNumber evidence="1">4.3.2.1</ecNumber>
    </recommendedName>
    <alternativeName>
        <fullName evidence="1">Arginosuccinase</fullName>
    </alternativeName>
</protein>
<feature type="chain" id="PRO_0000137835" description="Argininosuccinate lyase">
    <location>
        <begin position="1"/>
        <end position="463"/>
    </location>
</feature>
<dbReference type="EC" id="4.3.2.1" evidence="1"/>
<dbReference type="EMBL" id="AE007317">
    <property type="protein sequence ID" value="AAK98907.1"/>
    <property type="molecule type" value="Genomic_DNA"/>
</dbReference>
<dbReference type="PIR" id="G97884">
    <property type="entry name" value="G97884"/>
</dbReference>
<dbReference type="RefSeq" id="NP_357697.1">
    <property type="nucleotide sequence ID" value="NC_003098.1"/>
</dbReference>
<dbReference type="RefSeq" id="WP_001107614.1">
    <property type="nucleotide sequence ID" value="NC_003098.1"/>
</dbReference>
<dbReference type="SMR" id="Q8DRI4"/>
<dbReference type="STRING" id="171101.spr0103"/>
<dbReference type="KEGG" id="spr:spr0103"/>
<dbReference type="PATRIC" id="fig|171101.6.peg.122"/>
<dbReference type="eggNOG" id="COG0165">
    <property type="taxonomic scope" value="Bacteria"/>
</dbReference>
<dbReference type="HOGENOM" id="CLU_027272_2_3_9"/>
<dbReference type="UniPathway" id="UPA00068">
    <property type="reaction ID" value="UER00114"/>
</dbReference>
<dbReference type="Proteomes" id="UP000000586">
    <property type="component" value="Chromosome"/>
</dbReference>
<dbReference type="GO" id="GO:0005829">
    <property type="term" value="C:cytosol"/>
    <property type="evidence" value="ECO:0000318"/>
    <property type="project" value="GO_Central"/>
</dbReference>
<dbReference type="GO" id="GO:0004056">
    <property type="term" value="F:argininosuccinate lyase activity"/>
    <property type="evidence" value="ECO:0000318"/>
    <property type="project" value="GO_Central"/>
</dbReference>
<dbReference type="GO" id="GO:0042450">
    <property type="term" value="P:arginine biosynthetic process via ornithine"/>
    <property type="evidence" value="ECO:0000318"/>
    <property type="project" value="GO_Central"/>
</dbReference>
<dbReference type="GO" id="GO:0006526">
    <property type="term" value="P:L-arginine biosynthetic process"/>
    <property type="evidence" value="ECO:0007669"/>
    <property type="project" value="UniProtKB-UniRule"/>
</dbReference>
<dbReference type="CDD" id="cd01359">
    <property type="entry name" value="Argininosuccinate_lyase"/>
    <property type="match status" value="1"/>
</dbReference>
<dbReference type="FunFam" id="1.10.275.10:FF:000002">
    <property type="entry name" value="Argininosuccinate lyase"/>
    <property type="match status" value="1"/>
</dbReference>
<dbReference type="FunFam" id="1.10.40.30:FF:000001">
    <property type="entry name" value="Argininosuccinate lyase"/>
    <property type="match status" value="1"/>
</dbReference>
<dbReference type="FunFam" id="1.20.200.10:FF:000002">
    <property type="entry name" value="Argininosuccinate lyase"/>
    <property type="match status" value="1"/>
</dbReference>
<dbReference type="Gene3D" id="1.10.40.30">
    <property type="entry name" value="Fumarase/aspartase (C-terminal domain)"/>
    <property type="match status" value="1"/>
</dbReference>
<dbReference type="Gene3D" id="1.20.200.10">
    <property type="entry name" value="Fumarase/aspartase (Central domain)"/>
    <property type="match status" value="1"/>
</dbReference>
<dbReference type="Gene3D" id="1.10.275.10">
    <property type="entry name" value="Fumarase/aspartase (N-terminal domain)"/>
    <property type="match status" value="1"/>
</dbReference>
<dbReference type="HAMAP" id="MF_00006">
    <property type="entry name" value="Arg_succ_lyase"/>
    <property type="match status" value="1"/>
</dbReference>
<dbReference type="InterPro" id="IPR029419">
    <property type="entry name" value="Arg_succ_lyase_C"/>
</dbReference>
<dbReference type="InterPro" id="IPR009049">
    <property type="entry name" value="Argininosuccinate_lyase"/>
</dbReference>
<dbReference type="InterPro" id="IPR024083">
    <property type="entry name" value="Fumarase/histidase_N"/>
</dbReference>
<dbReference type="InterPro" id="IPR020557">
    <property type="entry name" value="Fumarate_lyase_CS"/>
</dbReference>
<dbReference type="InterPro" id="IPR000362">
    <property type="entry name" value="Fumarate_lyase_fam"/>
</dbReference>
<dbReference type="InterPro" id="IPR022761">
    <property type="entry name" value="Fumarate_lyase_N"/>
</dbReference>
<dbReference type="InterPro" id="IPR008948">
    <property type="entry name" value="L-Aspartase-like"/>
</dbReference>
<dbReference type="NCBIfam" id="TIGR00838">
    <property type="entry name" value="argH"/>
    <property type="match status" value="1"/>
</dbReference>
<dbReference type="PANTHER" id="PTHR43814">
    <property type="entry name" value="ARGININOSUCCINATE LYASE"/>
    <property type="match status" value="1"/>
</dbReference>
<dbReference type="PANTHER" id="PTHR43814:SF1">
    <property type="entry name" value="ARGININOSUCCINATE LYASE"/>
    <property type="match status" value="1"/>
</dbReference>
<dbReference type="Pfam" id="PF14698">
    <property type="entry name" value="ASL_C2"/>
    <property type="match status" value="1"/>
</dbReference>
<dbReference type="Pfam" id="PF00206">
    <property type="entry name" value="Lyase_1"/>
    <property type="match status" value="1"/>
</dbReference>
<dbReference type="PRINTS" id="PR00145">
    <property type="entry name" value="ARGSUCLYASE"/>
</dbReference>
<dbReference type="PRINTS" id="PR00149">
    <property type="entry name" value="FUMRATELYASE"/>
</dbReference>
<dbReference type="SUPFAM" id="SSF48557">
    <property type="entry name" value="L-aspartase-like"/>
    <property type="match status" value="1"/>
</dbReference>
<dbReference type="PROSITE" id="PS00163">
    <property type="entry name" value="FUMARATE_LYASES"/>
    <property type="match status" value="1"/>
</dbReference>